<sequence length="75" mass="8625">MASSCELCCEIFIAILLPPVGVCLRHGCCTVEFFICLILTCLGYLPGIIYAIYAICFLHRDEYFDEYRRPIYYVA</sequence>
<accession>O82232</accession>
<accession>Q53XD6</accession>
<gene>
    <name type="ordered locus">At2g24040</name>
    <name type="ORF">T29E15.24</name>
</gene>
<feature type="chain" id="PRO_0000193975" description="UPF0057 membrane protein At2g24040">
    <location>
        <begin position="1"/>
        <end position="75"/>
    </location>
</feature>
<feature type="transmembrane region" description="Helical" evidence="1">
    <location>
        <begin position="4"/>
        <end position="24"/>
    </location>
</feature>
<feature type="transmembrane region" description="Helical" evidence="1">
    <location>
        <begin position="33"/>
        <end position="53"/>
    </location>
</feature>
<name>RC22_ARATH</name>
<reference key="1">
    <citation type="journal article" date="1999" name="Nature">
        <title>Sequence and analysis of chromosome 2 of the plant Arabidopsis thaliana.</title>
        <authorList>
            <person name="Lin X."/>
            <person name="Kaul S."/>
            <person name="Rounsley S.D."/>
            <person name="Shea T.P."/>
            <person name="Benito M.-I."/>
            <person name="Town C.D."/>
            <person name="Fujii C.Y."/>
            <person name="Mason T.M."/>
            <person name="Bowman C.L."/>
            <person name="Barnstead M.E."/>
            <person name="Feldblyum T.V."/>
            <person name="Buell C.R."/>
            <person name="Ketchum K.A."/>
            <person name="Lee J.J."/>
            <person name="Ronning C.M."/>
            <person name="Koo H.L."/>
            <person name="Moffat K.S."/>
            <person name="Cronin L.A."/>
            <person name="Shen M."/>
            <person name="Pai G."/>
            <person name="Van Aken S."/>
            <person name="Umayam L."/>
            <person name="Tallon L.J."/>
            <person name="Gill J.E."/>
            <person name="Adams M.D."/>
            <person name="Carrera A.J."/>
            <person name="Creasy T.H."/>
            <person name="Goodman H.M."/>
            <person name="Somerville C.R."/>
            <person name="Copenhaver G.P."/>
            <person name="Preuss D."/>
            <person name="Nierman W.C."/>
            <person name="White O."/>
            <person name="Eisen J.A."/>
            <person name="Salzberg S.L."/>
            <person name="Fraser C.M."/>
            <person name="Venter J.C."/>
        </authorList>
    </citation>
    <scope>NUCLEOTIDE SEQUENCE [LARGE SCALE GENOMIC DNA]</scope>
    <source>
        <strain>cv. Columbia</strain>
    </source>
</reference>
<reference key="2">
    <citation type="journal article" date="2017" name="Plant J.">
        <title>Araport11: a complete reannotation of the Arabidopsis thaliana reference genome.</title>
        <authorList>
            <person name="Cheng C.Y."/>
            <person name="Krishnakumar V."/>
            <person name="Chan A.P."/>
            <person name="Thibaud-Nissen F."/>
            <person name="Schobel S."/>
            <person name="Town C.D."/>
        </authorList>
    </citation>
    <scope>GENOME REANNOTATION</scope>
    <source>
        <strain>cv. Columbia</strain>
    </source>
</reference>
<reference key="3">
    <citation type="submission" date="2004-04" db="EMBL/GenBank/DDBJ databases">
        <title>Arabidopsis ORF clones.</title>
        <authorList>
            <person name="Shinn P."/>
            <person name="Chen H."/>
            <person name="Cheuk R.F."/>
            <person name="Kim C.J."/>
            <person name="Ecker J.R."/>
        </authorList>
    </citation>
    <scope>NUCLEOTIDE SEQUENCE [LARGE SCALE MRNA]</scope>
    <source>
        <strain>cv. Columbia</strain>
    </source>
</reference>
<protein>
    <recommendedName>
        <fullName>UPF0057 membrane protein At2g24040</fullName>
    </recommendedName>
</protein>
<dbReference type="EMBL" id="AC005170">
    <property type="protein sequence ID" value="AAC63672.1"/>
    <property type="molecule type" value="Genomic_DNA"/>
</dbReference>
<dbReference type="EMBL" id="CP002685">
    <property type="protein sequence ID" value="AEC07522.1"/>
    <property type="molecule type" value="Genomic_DNA"/>
</dbReference>
<dbReference type="EMBL" id="BT012202">
    <property type="protein sequence ID" value="AAS76689.1"/>
    <property type="molecule type" value="mRNA"/>
</dbReference>
<dbReference type="EMBL" id="BT012367">
    <property type="protein sequence ID" value="AAS88757.1"/>
    <property type="molecule type" value="mRNA"/>
</dbReference>
<dbReference type="PIR" id="H84631">
    <property type="entry name" value="H84631"/>
</dbReference>
<dbReference type="RefSeq" id="NP_179982.1">
    <property type="nucleotide sequence ID" value="NM_127966.5"/>
</dbReference>
<dbReference type="SMR" id="O82232"/>
<dbReference type="BioGRID" id="2290">
    <property type="interactions" value="2"/>
</dbReference>
<dbReference type="FunCoup" id="O82232">
    <property type="interactions" value="70"/>
</dbReference>
<dbReference type="IntAct" id="O82232">
    <property type="interactions" value="2"/>
</dbReference>
<dbReference type="STRING" id="3702.O82232"/>
<dbReference type="PaxDb" id="3702-AT2G24040.1"/>
<dbReference type="ProteomicsDB" id="225950"/>
<dbReference type="EnsemblPlants" id="AT2G24040.1">
    <property type="protein sequence ID" value="AT2G24040.1"/>
    <property type="gene ID" value="AT2G24040"/>
</dbReference>
<dbReference type="GeneID" id="816938"/>
<dbReference type="Gramene" id="AT2G24040.1">
    <property type="protein sequence ID" value="AT2G24040.1"/>
    <property type="gene ID" value="AT2G24040"/>
</dbReference>
<dbReference type="KEGG" id="ath:AT2G24040"/>
<dbReference type="Araport" id="AT2G24040"/>
<dbReference type="TAIR" id="AT2G24040"/>
<dbReference type="eggNOG" id="KOG1773">
    <property type="taxonomic scope" value="Eukaryota"/>
</dbReference>
<dbReference type="HOGENOM" id="CLU_107649_6_1_1"/>
<dbReference type="InParanoid" id="O82232"/>
<dbReference type="OMA" id="YAICFLH"/>
<dbReference type="OrthoDB" id="2802411at2759"/>
<dbReference type="PhylomeDB" id="O82232"/>
<dbReference type="PRO" id="PR:O82232"/>
<dbReference type="Proteomes" id="UP000006548">
    <property type="component" value="Chromosome 2"/>
</dbReference>
<dbReference type="ExpressionAtlas" id="O82232">
    <property type="expression patterns" value="baseline and differential"/>
</dbReference>
<dbReference type="GO" id="GO:0016020">
    <property type="term" value="C:membrane"/>
    <property type="evidence" value="ECO:0007669"/>
    <property type="project" value="UniProtKB-SubCell"/>
</dbReference>
<dbReference type="InterPro" id="IPR000612">
    <property type="entry name" value="PMP3"/>
</dbReference>
<dbReference type="PANTHER" id="PTHR21659:SF77">
    <property type="entry name" value="GENOME ASSEMBLY, CHROMOSOME: A04"/>
    <property type="match status" value="1"/>
</dbReference>
<dbReference type="PANTHER" id="PTHR21659">
    <property type="entry name" value="HYDROPHOBIC PROTEIN RCI2 LOW TEMPERATURE AND SALT RESPONSIVE PROTEIN LTI6 -RELATED"/>
    <property type="match status" value="1"/>
</dbReference>
<dbReference type="Pfam" id="PF01679">
    <property type="entry name" value="Pmp3"/>
    <property type="match status" value="1"/>
</dbReference>
<dbReference type="PROSITE" id="PS01309">
    <property type="entry name" value="UPF0057"/>
    <property type="match status" value="1"/>
</dbReference>
<proteinExistence type="inferred from homology"/>
<organism>
    <name type="scientific">Arabidopsis thaliana</name>
    <name type="common">Mouse-ear cress</name>
    <dbReference type="NCBI Taxonomy" id="3702"/>
    <lineage>
        <taxon>Eukaryota</taxon>
        <taxon>Viridiplantae</taxon>
        <taxon>Streptophyta</taxon>
        <taxon>Embryophyta</taxon>
        <taxon>Tracheophyta</taxon>
        <taxon>Spermatophyta</taxon>
        <taxon>Magnoliopsida</taxon>
        <taxon>eudicotyledons</taxon>
        <taxon>Gunneridae</taxon>
        <taxon>Pentapetalae</taxon>
        <taxon>rosids</taxon>
        <taxon>malvids</taxon>
        <taxon>Brassicales</taxon>
        <taxon>Brassicaceae</taxon>
        <taxon>Camelineae</taxon>
        <taxon>Arabidopsis</taxon>
    </lineage>
</organism>
<comment type="subcellular location">
    <subcellularLocation>
        <location evidence="2">Membrane</location>
        <topology evidence="2">Multi-pass membrane protein</topology>
    </subcellularLocation>
</comment>
<comment type="similarity">
    <text evidence="2">Belongs to the UPF0057 (PMP3) family.</text>
</comment>
<keyword id="KW-0472">Membrane</keyword>
<keyword id="KW-1185">Reference proteome</keyword>
<keyword id="KW-0812">Transmembrane</keyword>
<keyword id="KW-1133">Transmembrane helix</keyword>
<evidence type="ECO:0000255" key="1"/>
<evidence type="ECO:0000305" key="2"/>